<evidence type="ECO:0000255" key="1">
    <source>
        <dbReference type="HAMAP-Rule" id="MF_00223"/>
    </source>
</evidence>
<organism>
    <name type="scientific">Rickettsia peacockii (strain Rustic)</name>
    <dbReference type="NCBI Taxonomy" id="562019"/>
    <lineage>
        <taxon>Bacteria</taxon>
        <taxon>Pseudomonadati</taxon>
        <taxon>Pseudomonadota</taxon>
        <taxon>Alphaproteobacteria</taxon>
        <taxon>Rickettsiales</taxon>
        <taxon>Rickettsiaceae</taxon>
        <taxon>Rickettsieae</taxon>
        <taxon>Rickettsia</taxon>
        <taxon>spotted fever group</taxon>
    </lineage>
</organism>
<comment type="catalytic activity">
    <reaction evidence="1">
        <text>GTP + H2O = 7,8-dihydroneopterin 3'-triphosphate + formate + H(+)</text>
        <dbReference type="Rhea" id="RHEA:17473"/>
        <dbReference type="ChEBI" id="CHEBI:15377"/>
        <dbReference type="ChEBI" id="CHEBI:15378"/>
        <dbReference type="ChEBI" id="CHEBI:15740"/>
        <dbReference type="ChEBI" id="CHEBI:37565"/>
        <dbReference type="ChEBI" id="CHEBI:58462"/>
        <dbReference type="EC" id="3.5.4.16"/>
    </reaction>
</comment>
<comment type="pathway">
    <text evidence="1">Cofactor biosynthesis; 7,8-dihydroneopterin triphosphate biosynthesis; 7,8-dihydroneopterin triphosphate from GTP: step 1/1.</text>
</comment>
<comment type="subunit">
    <text evidence="1">Homomer.</text>
</comment>
<comment type="similarity">
    <text evidence="1">Belongs to the GTP cyclohydrolase I family.</text>
</comment>
<keyword id="KW-0342">GTP-binding</keyword>
<keyword id="KW-0378">Hydrolase</keyword>
<keyword id="KW-0479">Metal-binding</keyword>
<keyword id="KW-0547">Nucleotide-binding</keyword>
<keyword id="KW-0554">One-carbon metabolism</keyword>
<keyword id="KW-0862">Zinc</keyword>
<sequence length="189" mass="21618">MSKPTREEAKEAVRTLLKFIGEDPSREGLLKTPDRVINSYAEIFSGYGKDVAEILNTKFYETCNFRDFILLNIKFTSFCEHHILPFNGTVDIAYVPDNCIVGISKLARIVNIFARRLQIQEKMTVQIAESVQENLKPLGVAVKISAVHSCMSMRGVMQDNSVMNTMHYTGIFAEQQKYRHEFLNFTAKR</sequence>
<name>GCH1_RICPU</name>
<dbReference type="EC" id="3.5.4.16" evidence="1"/>
<dbReference type="EMBL" id="CP001227">
    <property type="protein sequence ID" value="ACR47735.1"/>
    <property type="molecule type" value="Genomic_DNA"/>
</dbReference>
<dbReference type="RefSeq" id="WP_012736924.1">
    <property type="nucleotide sequence ID" value="NC_012730.1"/>
</dbReference>
<dbReference type="SMR" id="C4K2D8"/>
<dbReference type="KEGG" id="rpk:RPR_05900"/>
<dbReference type="HOGENOM" id="CLU_049768_3_1_5"/>
<dbReference type="UniPathway" id="UPA00848">
    <property type="reaction ID" value="UER00151"/>
</dbReference>
<dbReference type="Proteomes" id="UP000005015">
    <property type="component" value="Chromosome"/>
</dbReference>
<dbReference type="GO" id="GO:0005737">
    <property type="term" value="C:cytoplasm"/>
    <property type="evidence" value="ECO:0007669"/>
    <property type="project" value="TreeGrafter"/>
</dbReference>
<dbReference type="GO" id="GO:0005525">
    <property type="term" value="F:GTP binding"/>
    <property type="evidence" value="ECO:0007669"/>
    <property type="project" value="UniProtKB-KW"/>
</dbReference>
<dbReference type="GO" id="GO:0003934">
    <property type="term" value="F:GTP cyclohydrolase I activity"/>
    <property type="evidence" value="ECO:0007669"/>
    <property type="project" value="UniProtKB-UniRule"/>
</dbReference>
<dbReference type="GO" id="GO:0008270">
    <property type="term" value="F:zinc ion binding"/>
    <property type="evidence" value="ECO:0007669"/>
    <property type="project" value="UniProtKB-UniRule"/>
</dbReference>
<dbReference type="GO" id="GO:0006730">
    <property type="term" value="P:one-carbon metabolic process"/>
    <property type="evidence" value="ECO:0007669"/>
    <property type="project" value="UniProtKB-UniRule"/>
</dbReference>
<dbReference type="GO" id="GO:0006729">
    <property type="term" value="P:tetrahydrobiopterin biosynthetic process"/>
    <property type="evidence" value="ECO:0007669"/>
    <property type="project" value="TreeGrafter"/>
</dbReference>
<dbReference type="GO" id="GO:0046654">
    <property type="term" value="P:tetrahydrofolate biosynthetic process"/>
    <property type="evidence" value="ECO:0007669"/>
    <property type="project" value="UniProtKB-UniRule"/>
</dbReference>
<dbReference type="FunFam" id="1.10.286.10:FF:000001">
    <property type="entry name" value="GTP cyclohydrolase 1"/>
    <property type="match status" value="1"/>
</dbReference>
<dbReference type="FunFam" id="3.30.1130.10:FF:000001">
    <property type="entry name" value="GTP cyclohydrolase 1"/>
    <property type="match status" value="1"/>
</dbReference>
<dbReference type="Gene3D" id="1.10.286.10">
    <property type="match status" value="1"/>
</dbReference>
<dbReference type="Gene3D" id="3.30.1130.10">
    <property type="match status" value="1"/>
</dbReference>
<dbReference type="HAMAP" id="MF_00223">
    <property type="entry name" value="FolE"/>
    <property type="match status" value="1"/>
</dbReference>
<dbReference type="InterPro" id="IPR043133">
    <property type="entry name" value="GTP-CH-I_C/QueF"/>
</dbReference>
<dbReference type="InterPro" id="IPR043134">
    <property type="entry name" value="GTP-CH-I_N"/>
</dbReference>
<dbReference type="InterPro" id="IPR001474">
    <property type="entry name" value="GTP_CycHdrlase_I"/>
</dbReference>
<dbReference type="InterPro" id="IPR018234">
    <property type="entry name" value="GTP_CycHdrlase_I_CS"/>
</dbReference>
<dbReference type="InterPro" id="IPR020602">
    <property type="entry name" value="GTP_CycHdrlase_I_dom"/>
</dbReference>
<dbReference type="NCBIfam" id="TIGR00063">
    <property type="entry name" value="folE"/>
    <property type="match status" value="1"/>
</dbReference>
<dbReference type="NCBIfam" id="NF006825">
    <property type="entry name" value="PRK09347.1-2"/>
    <property type="match status" value="1"/>
</dbReference>
<dbReference type="NCBIfam" id="NF006826">
    <property type="entry name" value="PRK09347.1-3"/>
    <property type="match status" value="1"/>
</dbReference>
<dbReference type="PANTHER" id="PTHR11109:SF7">
    <property type="entry name" value="GTP CYCLOHYDROLASE 1"/>
    <property type="match status" value="1"/>
</dbReference>
<dbReference type="PANTHER" id="PTHR11109">
    <property type="entry name" value="GTP CYCLOHYDROLASE I"/>
    <property type="match status" value="1"/>
</dbReference>
<dbReference type="Pfam" id="PF01227">
    <property type="entry name" value="GTP_cyclohydroI"/>
    <property type="match status" value="1"/>
</dbReference>
<dbReference type="SUPFAM" id="SSF55620">
    <property type="entry name" value="Tetrahydrobiopterin biosynthesis enzymes-like"/>
    <property type="match status" value="1"/>
</dbReference>
<dbReference type="PROSITE" id="PS00859">
    <property type="entry name" value="GTP_CYCLOHYDROL_1_1"/>
    <property type="match status" value="1"/>
</dbReference>
<dbReference type="PROSITE" id="PS00860">
    <property type="entry name" value="GTP_CYCLOHYDROL_1_2"/>
    <property type="match status" value="1"/>
</dbReference>
<gene>
    <name evidence="1" type="primary">folE</name>
    <name type="ordered locus">RPR_05900</name>
</gene>
<proteinExistence type="inferred from homology"/>
<reference key="1">
    <citation type="journal article" date="2009" name="PLoS ONE">
        <title>Genome sequence of the endosymbiont Rickettsia peacockii and comparison with virulent Rickettsia rickettsii: identification of virulence factors.</title>
        <authorList>
            <person name="Felsheim R.F."/>
            <person name="Kurtti T.J."/>
            <person name="Munderloh U.G."/>
        </authorList>
    </citation>
    <scope>NUCLEOTIDE SEQUENCE [LARGE SCALE GENOMIC DNA]</scope>
    <source>
        <strain>Rustic</strain>
    </source>
</reference>
<protein>
    <recommendedName>
        <fullName evidence="1">GTP cyclohydrolase 1</fullName>
        <ecNumber evidence="1">3.5.4.16</ecNumber>
    </recommendedName>
    <alternativeName>
        <fullName evidence="1">GTP cyclohydrolase I</fullName>
        <shortName evidence="1">GTP-CH-I</shortName>
    </alternativeName>
</protein>
<feature type="chain" id="PRO_1000204293" description="GTP cyclohydrolase 1">
    <location>
        <begin position="1"/>
        <end position="189"/>
    </location>
</feature>
<feature type="binding site" evidence="1">
    <location>
        <position position="79"/>
    </location>
    <ligand>
        <name>Zn(2+)</name>
        <dbReference type="ChEBI" id="CHEBI:29105"/>
    </ligand>
</feature>
<feature type="binding site" evidence="1">
    <location>
        <position position="82"/>
    </location>
    <ligand>
        <name>Zn(2+)</name>
        <dbReference type="ChEBI" id="CHEBI:29105"/>
    </ligand>
</feature>
<feature type="binding site" evidence="1">
    <location>
        <position position="150"/>
    </location>
    <ligand>
        <name>Zn(2+)</name>
        <dbReference type="ChEBI" id="CHEBI:29105"/>
    </ligand>
</feature>
<accession>C4K2D8</accession>